<organism>
    <name type="scientific">Arabidopsis thaliana</name>
    <name type="common">Mouse-ear cress</name>
    <dbReference type="NCBI Taxonomy" id="3702"/>
    <lineage>
        <taxon>Eukaryota</taxon>
        <taxon>Viridiplantae</taxon>
        <taxon>Streptophyta</taxon>
        <taxon>Embryophyta</taxon>
        <taxon>Tracheophyta</taxon>
        <taxon>Spermatophyta</taxon>
        <taxon>Magnoliopsida</taxon>
        <taxon>eudicotyledons</taxon>
        <taxon>Gunneridae</taxon>
        <taxon>Pentapetalae</taxon>
        <taxon>rosids</taxon>
        <taxon>malvids</taxon>
        <taxon>Brassicales</taxon>
        <taxon>Brassicaceae</taxon>
        <taxon>Camelineae</taxon>
        <taxon>Arabidopsis</taxon>
    </lineage>
</organism>
<keyword id="KW-1185">Reference proteome</keyword>
<gene>
    <name type="primary">LBD9</name>
    <name type="synonym">ASL35</name>
    <name type="ordered locus">At2g19820</name>
    <name type="ORF">F6F22.15</name>
</gene>
<feature type="chain" id="PRO_0000132260" description="LOB domain-containing protein 9">
    <location>
        <begin position="1"/>
        <end position="124"/>
    </location>
</feature>
<feature type="domain" description="LOB" evidence="1">
    <location>
        <begin position="11"/>
        <end position="113"/>
    </location>
</feature>
<protein>
    <recommendedName>
        <fullName>LOB domain-containing protein 9</fullName>
    </recommendedName>
    <alternativeName>
        <fullName>ASYMMETRIC LEAVES 2-like protein 35</fullName>
        <shortName>AS2-like protein 35</shortName>
    </alternativeName>
</protein>
<sequence length="124" mass="14486">MDVSRVNVKRAPCALCTTKNKRCPKKCDFAPYFPAERKGEYENAHKLFGTSNIIKMMRFASKDKQRDMLASSILMEGDAWKKDPARGGFGMIQKLKWQIELRKIYLNELKEKIKVEKEKTELRL</sequence>
<accession>O82198</accession>
<accession>B7XG89</accession>
<dbReference type="EMBL" id="AB473868">
    <property type="protein sequence ID" value="BAH10579.1"/>
    <property type="molecule type" value="mRNA"/>
</dbReference>
<dbReference type="EMBL" id="AC005169">
    <property type="protein sequence ID" value="AAC62134.1"/>
    <property type="molecule type" value="Genomic_DNA"/>
</dbReference>
<dbReference type="EMBL" id="CP002685">
    <property type="protein sequence ID" value="AEC06930.1"/>
    <property type="molecule type" value="Genomic_DNA"/>
</dbReference>
<dbReference type="PIR" id="E84581">
    <property type="entry name" value="E84581"/>
</dbReference>
<dbReference type="RefSeq" id="NP_179572.1">
    <property type="nucleotide sequence ID" value="NM_127540.4"/>
</dbReference>
<dbReference type="SMR" id="O82198"/>
<dbReference type="STRING" id="3702.O82198"/>
<dbReference type="PaxDb" id="3702-AT2G19820.1"/>
<dbReference type="EnsemblPlants" id="AT2G19820.1">
    <property type="protein sequence ID" value="AT2G19820.1"/>
    <property type="gene ID" value="AT2G19820"/>
</dbReference>
<dbReference type="GeneID" id="816501"/>
<dbReference type="Gramene" id="AT2G19820.1">
    <property type="protein sequence ID" value="AT2G19820.1"/>
    <property type="gene ID" value="AT2G19820"/>
</dbReference>
<dbReference type="KEGG" id="ath:AT2G19820"/>
<dbReference type="Araport" id="AT2G19820"/>
<dbReference type="TAIR" id="AT2G19820">
    <property type="gene designation" value="LBD9"/>
</dbReference>
<dbReference type="eggNOG" id="ENOG502R1NA">
    <property type="taxonomic scope" value="Eukaryota"/>
</dbReference>
<dbReference type="HOGENOM" id="CLU_058353_8_0_1"/>
<dbReference type="InParanoid" id="O82198"/>
<dbReference type="OMA" id="WQIELRK"/>
<dbReference type="PhylomeDB" id="O82198"/>
<dbReference type="PRO" id="PR:O82198"/>
<dbReference type="Proteomes" id="UP000006548">
    <property type="component" value="Chromosome 2"/>
</dbReference>
<dbReference type="ExpressionAtlas" id="O82198">
    <property type="expression patterns" value="baseline"/>
</dbReference>
<dbReference type="InterPro" id="IPR004883">
    <property type="entry name" value="LOB"/>
</dbReference>
<dbReference type="PANTHER" id="PTHR31301">
    <property type="entry name" value="LOB DOMAIN-CONTAINING PROTEIN 4-RELATED"/>
    <property type="match status" value="1"/>
</dbReference>
<dbReference type="PANTHER" id="PTHR31301:SF103">
    <property type="entry name" value="LOB DOMAIN-CONTAINING PROTEIN 5-RELATED"/>
    <property type="match status" value="1"/>
</dbReference>
<dbReference type="Pfam" id="PF03195">
    <property type="entry name" value="LOB"/>
    <property type="match status" value="1"/>
</dbReference>
<dbReference type="PROSITE" id="PS50891">
    <property type="entry name" value="LOB"/>
    <property type="match status" value="1"/>
</dbReference>
<comment type="similarity">
    <text evidence="2">Belongs to the LOB domain-containing protein family.</text>
</comment>
<proteinExistence type="evidence at transcript level"/>
<evidence type="ECO:0000255" key="1">
    <source>
        <dbReference type="PROSITE-ProRule" id="PRU00291"/>
    </source>
</evidence>
<evidence type="ECO:0000305" key="2"/>
<name>LBD9_ARATH</name>
<reference key="1">
    <citation type="journal article" date="2009" name="Plant J.">
        <title>Characterization of genes in the ASYMMETRIC LEAVES2/LATERAL ORGAN BOUNDARIES (AS2/LOB) family in Arabidopsis thaliana, and functional and molecular comparisons between AS2 and other family members.</title>
        <authorList>
            <person name="Matsumura Y."/>
            <person name="Iwakawa H."/>
            <person name="Machida Y."/>
            <person name="Machida C."/>
        </authorList>
    </citation>
    <scope>NUCLEOTIDE SEQUENCE [MRNA]</scope>
    <source>
        <strain>cv. Columbia</strain>
    </source>
</reference>
<reference key="2">
    <citation type="journal article" date="1999" name="Nature">
        <title>Sequence and analysis of chromosome 2 of the plant Arabidopsis thaliana.</title>
        <authorList>
            <person name="Lin X."/>
            <person name="Kaul S."/>
            <person name="Rounsley S.D."/>
            <person name="Shea T.P."/>
            <person name="Benito M.-I."/>
            <person name="Town C.D."/>
            <person name="Fujii C.Y."/>
            <person name="Mason T.M."/>
            <person name="Bowman C.L."/>
            <person name="Barnstead M.E."/>
            <person name="Feldblyum T.V."/>
            <person name="Buell C.R."/>
            <person name="Ketchum K.A."/>
            <person name="Lee J.J."/>
            <person name="Ronning C.M."/>
            <person name="Koo H.L."/>
            <person name="Moffat K.S."/>
            <person name="Cronin L.A."/>
            <person name="Shen M."/>
            <person name="Pai G."/>
            <person name="Van Aken S."/>
            <person name="Umayam L."/>
            <person name="Tallon L.J."/>
            <person name="Gill J.E."/>
            <person name="Adams M.D."/>
            <person name="Carrera A.J."/>
            <person name="Creasy T.H."/>
            <person name="Goodman H.M."/>
            <person name="Somerville C.R."/>
            <person name="Copenhaver G.P."/>
            <person name="Preuss D."/>
            <person name="Nierman W.C."/>
            <person name="White O."/>
            <person name="Eisen J.A."/>
            <person name="Salzberg S.L."/>
            <person name="Fraser C.M."/>
            <person name="Venter J.C."/>
        </authorList>
    </citation>
    <scope>NUCLEOTIDE SEQUENCE [LARGE SCALE GENOMIC DNA]</scope>
    <source>
        <strain>cv. Columbia</strain>
    </source>
</reference>
<reference key="3">
    <citation type="journal article" date="2017" name="Plant J.">
        <title>Araport11: a complete reannotation of the Arabidopsis thaliana reference genome.</title>
        <authorList>
            <person name="Cheng C.Y."/>
            <person name="Krishnakumar V."/>
            <person name="Chan A.P."/>
            <person name="Thibaud-Nissen F."/>
            <person name="Schobel S."/>
            <person name="Town C.D."/>
        </authorList>
    </citation>
    <scope>GENOME REANNOTATION</scope>
    <source>
        <strain>cv. Columbia</strain>
    </source>
</reference>
<reference key="4">
    <citation type="journal article" date="2002" name="Plant Physiol.">
        <title>The LATERAL ORGAN BOUNDARIES gene defines a novel, plant-specific gene family.</title>
        <authorList>
            <person name="Shuai B."/>
            <person name="Reynaga-Pena C.G."/>
            <person name="Springer P.S."/>
        </authorList>
    </citation>
    <scope>GENE FAMILY</scope>
    <scope>NOMENCLATURE</scope>
</reference>
<reference key="5">
    <citation type="journal article" date="2002" name="Plant Cell Physiol.">
        <title>The ASYMMETRIC LEAVES2 gene of Arabidopsis thaliana, required for formation of a symmetric flat leaf lamina, encodes a member of a novel family of proteins characterized by cysteine repeats and a leucine zipper.</title>
        <authorList>
            <person name="Iwakawa H."/>
            <person name="Ueno Y."/>
            <person name="Semiarti E."/>
            <person name="Onouchi H."/>
            <person name="Kojima S."/>
            <person name="Tsukaya H."/>
            <person name="Hasebe M."/>
            <person name="Soma T."/>
            <person name="Ikezaki M."/>
            <person name="Machida C."/>
            <person name="Machida Y."/>
        </authorList>
    </citation>
    <scope>GENE FAMILY</scope>
    <scope>NOMENCLATURE</scope>
</reference>